<name>SYA_ERYLH</name>
<gene>
    <name evidence="1" type="primary">alaS</name>
    <name type="ordered locus">ELI_07720</name>
</gene>
<evidence type="ECO:0000255" key="1">
    <source>
        <dbReference type="HAMAP-Rule" id="MF_00036"/>
    </source>
</evidence>
<comment type="function">
    <text evidence="1">Catalyzes the attachment of alanine to tRNA(Ala) in a two-step reaction: alanine is first activated by ATP to form Ala-AMP and then transferred to the acceptor end of tRNA(Ala). Also edits incorrectly charged Ser-tRNA(Ala) and Gly-tRNA(Ala) via its editing domain.</text>
</comment>
<comment type="catalytic activity">
    <reaction evidence="1">
        <text>tRNA(Ala) + L-alanine + ATP = L-alanyl-tRNA(Ala) + AMP + diphosphate</text>
        <dbReference type="Rhea" id="RHEA:12540"/>
        <dbReference type="Rhea" id="RHEA-COMP:9657"/>
        <dbReference type="Rhea" id="RHEA-COMP:9923"/>
        <dbReference type="ChEBI" id="CHEBI:30616"/>
        <dbReference type="ChEBI" id="CHEBI:33019"/>
        <dbReference type="ChEBI" id="CHEBI:57972"/>
        <dbReference type="ChEBI" id="CHEBI:78442"/>
        <dbReference type="ChEBI" id="CHEBI:78497"/>
        <dbReference type="ChEBI" id="CHEBI:456215"/>
        <dbReference type="EC" id="6.1.1.7"/>
    </reaction>
</comment>
<comment type="cofactor">
    <cofactor evidence="1">
        <name>Zn(2+)</name>
        <dbReference type="ChEBI" id="CHEBI:29105"/>
    </cofactor>
    <text evidence="1">Binds 1 zinc ion per subunit.</text>
</comment>
<comment type="subcellular location">
    <subcellularLocation>
        <location evidence="1">Cytoplasm</location>
    </subcellularLocation>
</comment>
<comment type="domain">
    <text evidence="1">Consists of three domains; the N-terminal catalytic domain, the editing domain and the C-terminal C-Ala domain. The editing domain removes incorrectly charged amino acids, while the C-Ala domain, along with tRNA(Ala), serves as a bridge to cooperatively bring together the editing and aminoacylation centers thus stimulating deacylation of misacylated tRNAs.</text>
</comment>
<comment type="similarity">
    <text evidence="1">Belongs to the class-II aminoacyl-tRNA synthetase family.</text>
</comment>
<sequence length="887" mass="95962">MQSTNDIRRSFLDYFTGAGHAEIASAPLVPYNDPTLMFVNAGMVPFKNVFTGLETPPAPTATSSQKCVRAGGKHNDLDNVGYTARHHTFFEMLGNFSFGDYFKEQAIEHAWTLLTREWGIDAARLTATVYHTDDEAYDFWRKIAGLPEERIIRIATKDNFWAMGDDGPCGPCSEIFFDHGDHIFGGPPGSPEEDGDRFVEVWNLVFMQHEQTGGEITGDLPNKNIDTGMGLERIAAVMQGVHDNYDTDTFKELIGASEGLTGVKAEGDQAASHRVIADHLRSTSFLIADGVLPSSEGRGYVLRRIMRRAMRHAHLLGASEPLMHRLVPALVTEMGQAYPELTRGQALIEETLEREEARFRQTLEKGLRLLDDATGDMSEGDTLDGETAFKLYDTYGFPYDLTEDALRPRGIAVDETGFASAMQRQKDAARAAWKGSGQAADSEVWFDIAEREGATEFTGYTSTSGEGRVVALVKNGKEVDSASAGDEVVILTNQTPFYGESGGQTGDAGTMSTPDGVKVEVTDTGKPLGRLHTHQAKIQSGTVLKGDTLHLDVDVDRRDRVRANHSATHLVHAALRNRLGEHVTQKGSLVAEDRLRFDFSHPKPLSEDDIAAIEAEVNEEIRANETVTTRLMSPDDAVDAGALALFGEKYGEEVRVLSMGRRSKEGRNYSVELCGGTHVRATGDIQLFRIISESAVSSGVRRIEALTGDAARQWLVRREEALKSAASALRTNPEEVAERVAALLDERKALEKELADARKQLALGGGGSQVAQSQDETIGDVTFSGQVINGLNPKDLRGLLDEAKQRMGSGIAAICAVNEGKAAFAAAVTDDLTDRYNAVDLVRAGVEVLGGKGGGGRPDMAQGGGPDGLKAEAALNAVRERLASAAA</sequence>
<reference key="1">
    <citation type="journal article" date="2009" name="J. Bacteriol.">
        <title>Complete genome sequence of Erythrobacter litoralis HTCC2594.</title>
        <authorList>
            <person name="Oh H.M."/>
            <person name="Giovannoni S.J."/>
            <person name="Ferriera S."/>
            <person name="Johnson J."/>
            <person name="Cho J.C."/>
        </authorList>
    </citation>
    <scope>NUCLEOTIDE SEQUENCE [LARGE SCALE GENOMIC DNA]</scope>
    <source>
        <strain>HTCC2594</strain>
    </source>
</reference>
<proteinExistence type="inferred from homology"/>
<organism>
    <name type="scientific">Erythrobacter litoralis (strain HTCC2594)</name>
    <dbReference type="NCBI Taxonomy" id="314225"/>
    <lineage>
        <taxon>Bacteria</taxon>
        <taxon>Pseudomonadati</taxon>
        <taxon>Pseudomonadota</taxon>
        <taxon>Alphaproteobacteria</taxon>
        <taxon>Sphingomonadales</taxon>
        <taxon>Erythrobacteraceae</taxon>
        <taxon>Erythrobacter/Porphyrobacter group</taxon>
        <taxon>Erythrobacter</taxon>
    </lineage>
</organism>
<dbReference type="EC" id="6.1.1.7" evidence="1"/>
<dbReference type="EMBL" id="CP000157">
    <property type="protein sequence ID" value="ABC63636.1"/>
    <property type="molecule type" value="Genomic_DNA"/>
</dbReference>
<dbReference type="RefSeq" id="WP_011414470.1">
    <property type="nucleotide sequence ID" value="NC_007722.1"/>
</dbReference>
<dbReference type="SMR" id="Q2N9K5"/>
<dbReference type="STRING" id="314225.ELI_07720"/>
<dbReference type="KEGG" id="eli:ELI_07720"/>
<dbReference type="eggNOG" id="COG0013">
    <property type="taxonomic scope" value="Bacteria"/>
</dbReference>
<dbReference type="HOGENOM" id="CLU_004485_1_1_5"/>
<dbReference type="OrthoDB" id="9803884at2"/>
<dbReference type="Proteomes" id="UP000008808">
    <property type="component" value="Chromosome"/>
</dbReference>
<dbReference type="GO" id="GO:0005829">
    <property type="term" value="C:cytosol"/>
    <property type="evidence" value="ECO:0007669"/>
    <property type="project" value="TreeGrafter"/>
</dbReference>
<dbReference type="GO" id="GO:0004813">
    <property type="term" value="F:alanine-tRNA ligase activity"/>
    <property type="evidence" value="ECO:0007669"/>
    <property type="project" value="UniProtKB-UniRule"/>
</dbReference>
<dbReference type="GO" id="GO:0002161">
    <property type="term" value="F:aminoacyl-tRNA deacylase activity"/>
    <property type="evidence" value="ECO:0007669"/>
    <property type="project" value="TreeGrafter"/>
</dbReference>
<dbReference type="GO" id="GO:0005524">
    <property type="term" value="F:ATP binding"/>
    <property type="evidence" value="ECO:0007669"/>
    <property type="project" value="UniProtKB-UniRule"/>
</dbReference>
<dbReference type="GO" id="GO:0000049">
    <property type="term" value="F:tRNA binding"/>
    <property type="evidence" value="ECO:0007669"/>
    <property type="project" value="UniProtKB-KW"/>
</dbReference>
<dbReference type="GO" id="GO:0008270">
    <property type="term" value="F:zinc ion binding"/>
    <property type="evidence" value="ECO:0007669"/>
    <property type="project" value="UniProtKB-UniRule"/>
</dbReference>
<dbReference type="GO" id="GO:0006419">
    <property type="term" value="P:alanyl-tRNA aminoacylation"/>
    <property type="evidence" value="ECO:0007669"/>
    <property type="project" value="UniProtKB-UniRule"/>
</dbReference>
<dbReference type="GO" id="GO:0045892">
    <property type="term" value="P:negative regulation of DNA-templated transcription"/>
    <property type="evidence" value="ECO:0007669"/>
    <property type="project" value="TreeGrafter"/>
</dbReference>
<dbReference type="CDD" id="cd00673">
    <property type="entry name" value="AlaRS_core"/>
    <property type="match status" value="1"/>
</dbReference>
<dbReference type="FunFam" id="3.10.310.40:FF:000001">
    <property type="entry name" value="Alanine--tRNA ligase"/>
    <property type="match status" value="1"/>
</dbReference>
<dbReference type="FunFam" id="3.30.54.20:FF:000001">
    <property type="entry name" value="Alanine--tRNA ligase"/>
    <property type="match status" value="1"/>
</dbReference>
<dbReference type="FunFam" id="3.30.930.10:FF:000004">
    <property type="entry name" value="Alanine--tRNA ligase"/>
    <property type="match status" value="1"/>
</dbReference>
<dbReference type="FunFam" id="3.30.980.10:FF:000004">
    <property type="entry name" value="Alanine--tRNA ligase, cytoplasmic"/>
    <property type="match status" value="1"/>
</dbReference>
<dbReference type="Gene3D" id="2.40.30.130">
    <property type="match status" value="1"/>
</dbReference>
<dbReference type="Gene3D" id="3.10.310.40">
    <property type="match status" value="1"/>
</dbReference>
<dbReference type="Gene3D" id="3.30.54.20">
    <property type="match status" value="1"/>
</dbReference>
<dbReference type="Gene3D" id="6.10.250.550">
    <property type="match status" value="1"/>
</dbReference>
<dbReference type="Gene3D" id="3.30.930.10">
    <property type="entry name" value="Bira Bifunctional Protein, Domain 2"/>
    <property type="match status" value="1"/>
</dbReference>
<dbReference type="Gene3D" id="3.30.980.10">
    <property type="entry name" value="Threonyl-trna Synthetase, Chain A, domain 2"/>
    <property type="match status" value="1"/>
</dbReference>
<dbReference type="HAMAP" id="MF_00036_B">
    <property type="entry name" value="Ala_tRNA_synth_B"/>
    <property type="match status" value="1"/>
</dbReference>
<dbReference type="InterPro" id="IPR045864">
    <property type="entry name" value="aa-tRNA-synth_II/BPL/LPL"/>
</dbReference>
<dbReference type="InterPro" id="IPR002318">
    <property type="entry name" value="Ala-tRNA-lgiase_IIc"/>
</dbReference>
<dbReference type="InterPro" id="IPR018162">
    <property type="entry name" value="Ala-tRNA-ligase_IIc_anticod-bd"/>
</dbReference>
<dbReference type="InterPro" id="IPR018165">
    <property type="entry name" value="Ala-tRNA-synth_IIc_core"/>
</dbReference>
<dbReference type="InterPro" id="IPR018164">
    <property type="entry name" value="Ala-tRNA-synth_IIc_N"/>
</dbReference>
<dbReference type="InterPro" id="IPR050058">
    <property type="entry name" value="Ala-tRNA_ligase"/>
</dbReference>
<dbReference type="InterPro" id="IPR023033">
    <property type="entry name" value="Ala_tRNA_ligase_euk/bac"/>
</dbReference>
<dbReference type="InterPro" id="IPR003156">
    <property type="entry name" value="DHHA1_dom"/>
</dbReference>
<dbReference type="InterPro" id="IPR018163">
    <property type="entry name" value="Thr/Ala-tRNA-synth_IIc_edit"/>
</dbReference>
<dbReference type="InterPro" id="IPR009000">
    <property type="entry name" value="Transl_B-barrel_sf"/>
</dbReference>
<dbReference type="InterPro" id="IPR012947">
    <property type="entry name" value="tRNA_SAD"/>
</dbReference>
<dbReference type="NCBIfam" id="TIGR00344">
    <property type="entry name" value="alaS"/>
    <property type="match status" value="1"/>
</dbReference>
<dbReference type="PANTHER" id="PTHR11777:SF9">
    <property type="entry name" value="ALANINE--TRNA LIGASE, CYTOPLASMIC"/>
    <property type="match status" value="1"/>
</dbReference>
<dbReference type="PANTHER" id="PTHR11777">
    <property type="entry name" value="ALANYL-TRNA SYNTHETASE"/>
    <property type="match status" value="1"/>
</dbReference>
<dbReference type="Pfam" id="PF02272">
    <property type="entry name" value="DHHA1"/>
    <property type="match status" value="1"/>
</dbReference>
<dbReference type="Pfam" id="PF01411">
    <property type="entry name" value="tRNA-synt_2c"/>
    <property type="match status" value="1"/>
</dbReference>
<dbReference type="Pfam" id="PF07973">
    <property type="entry name" value="tRNA_SAD"/>
    <property type="match status" value="1"/>
</dbReference>
<dbReference type="PRINTS" id="PR00980">
    <property type="entry name" value="TRNASYNTHALA"/>
</dbReference>
<dbReference type="SMART" id="SM00863">
    <property type="entry name" value="tRNA_SAD"/>
    <property type="match status" value="1"/>
</dbReference>
<dbReference type="SUPFAM" id="SSF55681">
    <property type="entry name" value="Class II aaRS and biotin synthetases"/>
    <property type="match status" value="1"/>
</dbReference>
<dbReference type="SUPFAM" id="SSF101353">
    <property type="entry name" value="Putative anticodon-binding domain of alanyl-tRNA synthetase (AlaRS)"/>
    <property type="match status" value="1"/>
</dbReference>
<dbReference type="SUPFAM" id="SSF55186">
    <property type="entry name" value="ThrRS/AlaRS common domain"/>
    <property type="match status" value="1"/>
</dbReference>
<dbReference type="SUPFAM" id="SSF50447">
    <property type="entry name" value="Translation proteins"/>
    <property type="match status" value="1"/>
</dbReference>
<dbReference type="PROSITE" id="PS50860">
    <property type="entry name" value="AA_TRNA_LIGASE_II_ALA"/>
    <property type="match status" value="1"/>
</dbReference>
<accession>Q2N9K5</accession>
<keyword id="KW-0030">Aminoacyl-tRNA synthetase</keyword>
<keyword id="KW-0067">ATP-binding</keyword>
<keyword id="KW-0963">Cytoplasm</keyword>
<keyword id="KW-0436">Ligase</keyword>
<keyword id="KW-0479">Metal-binding</keyword>
<keyword id="KW-0547">Nucleotide-binding</keyword>
<keyword id="KW-0648">Protein biosynthesis</keyword>
<keyword id="KW-1185">Reference proteome</keyword>
<keyword id="KW-0694">RNA-binding</keyword>
<keyword id="KW-0820">tRNA-binding</keyword>
<keyword id="KW-0862">Zinc</keyword>
<protein>
    <recommendedName>
        <fullName evidence="1">Alanine--tRNA ligase</fullName>
        <ecNumber evidence="1">6.1.1.7</ecNumber>
    </recommendedName>
    <alternativeName>
        <fullName evidence="1">Alanyl-tRNA synthetase</fullName>
        <shortName evidence="1">AlaRS</shortName>
    </alternativeName>
</protein>
<feature type="chain" id="PRO_0000347595" description="Alanine--tRNA ligase">
    <location>
        <begin position="1"/>
        <end position="887"/>
    </location>
</feature>
<feature type="binding site" evidence="1">
    <location>
        <position position="565"/>
    </location>
    <ligand>
        <name>Zn(2+)</name>
        <dbReference type="ChEBI" id="CHEBI:29105"/>
    </ligand>
</feature>
<feature type="binding site" evidence="1">
    <location>
        <position position="569"/>
    </location>
    <ligand>
        <name>Zn(2+)</name>
        <dbReference type="ChEBI" id="CHEBI:29105"/>
    </ligand>
</feature>
<feature type="binding site" evidence="1">
    <location>
        <position position="674"/>
    </location>
    <ligand>
        <name>Zn(2+)</name>
        <dbReference type="ChEBI" id="CHEBI:29105"/>
    </ligand>
</feature>
<feature type="binding site" evidence="1">
    <location>
        <position position="678"/>
    </location>
    <ligand>
        <name>Zn(2+)</name>
        <dbReference type="ChEBI" id="CHEBI:29105"/>
    </ligand>
</feature>